<gene>
    <name evidence="1" type="primary">lpxD</name>
    <name type="ordered locus">BVU_0097</name>
</gene>
<organism>
    <name type="scientific">Phocaeicola vulgatus (strain ATCC 8482 / DSM 1447 / JCM 5826 / CCUG 4940 / NBRC 14291 / NCTC 11154)</name>
    <name type="common">Bacteroides vulgatus</name>
    <dbReference type="NCBI Taxonomy" id="435590"/>
    <lineage>
        <taxon>Bacteria</taxon>
        <taxon>Pseudomonadati</taxon>
        <taxon>Bacteroidota</taxon>
        <taxon>Bacteroidia</taxon>
        <taxon>Bacteroidales</taxon>
        <taxon>Bacteroidaceae</taxon>
        <taxon>Phocaeicola</taxon>
    </lineage>
</organism>
<sequence>MEFSAKQIAEYIQGIIVGDENATVHTFAKIEEGVPGAISFLSNPKYTHYIYDTQSTIVLVNKDFVPEQEVKATLIKVDNAYESLAKLLTLYEMSKPKKTGIDPLAYVAPTAKLGKDVYIAPFACVGDGAEIGDNTSLHPHATVGSHAKVGNNCTLYPHATIYHDCLVGNHCTLHAGCVIGADGFGFAPSPEGYEKIPQIGIAIIEDNVEIGANTCVDRATMGATIVHKGVKLDNLIQIAHNVEVGSHTVMASQVGIAGSTKVGEWCMFGGQVGLAGHIKIGDKVGIGAQAGVPGNVKSNEQILGTPAIDAKNFMKSSAVYKKLPEIYTTLNAMQKEIEELKKQLNK</sequence>
<accession>A6KWL3</accession>
<proteinExistence type="inferred from homology"/>
<dbReference type="EC" id="2.3.1.191" evidence="1"/>
<dbReference type="EMBL" id="CP000139">
    <property type="protein sequence ID" value="ABR37827.1"/>
    <property type="molecule type" value="Genomic_DNA"/>
</dbReference>
<dbReference type="RefSeq" id="WP_005851060.1">
    <property type="nucleotide sequence ID" value="NZ_JANSWM010000057.1"/>
</dbReference>
<dbReference type="SMR" id="A6KWL3"/>
<dbReference type="STRING" id="435590.BVU_0097"/>
<dbReference type="PaxDb" id="435590-BVU_0097"/>
<dbReference type="GeneID" id="5301067"/>
<dbReference type="KEGG" id="bvu:BVU_0097"/>
<dbReference type="eggNOG" id="COG1044">
    <property type="taxonomic scope" value="Bacteria"/>
</dbReference>
<dbReference type="HOGENOM" id="CLU_049865_0_0_10"/>
<dbReference type="BioCyc" id="BVUL435590:G1G59-103-MONOMER"/>
<dbReference type="UniPathway" id="UPA00973"/>
<dbReference type="Proteomes" id="UP000002861">
    <property type="component" value="Chromosome"/>
</dbReference>
<dbReference type="GO" id="GO:0016020">
    <property type="term" value="C:membrane"/>
    <property type="evidence" value="ECO:0007669"/>
    <property type="project" value="GOC"/>
</dbReference>
<dbReference type="GO" id="GO:0016410">
    <property type="term" value="F:N-acyltransferase activity"/>
    <property type="evidence" value="ECO:0007669"/>
    <property type="project" value="InterPro"/>
</dbReference>
<dbReference type="GO" id="GO:0009245">
    <property type="term" value="P:lipid A biosynthetic process"/>
    <property type="evidence" value="ECO:0007669"/>
    <property type="project" value="UniProtKB-UniRule"/>
</dbReference>
<dbReference type="CDD" id="cd03352">
    <property type="entry name" value="LbH_LpxD"/>
    <property type="match status" value="1"/>
</dbReference>
<dbReference type="Gene3D" id="2.160.10.10">
    <property type="entry name" value="Hexapeptide repeat proteins"/>
    <property type="match status" value="1"/>
</dbReference>
<dbReference type="Gene3D" id="3.40.1390.10">
    <property type="entry name" value="MurE/MurF, N-terminal domain"/>
    <property type="match status" value="1"/>
</dbReference>
<dbReference type="HAMAP" id="MF_00523">
    <property type="entry name" value="LpxD"/>
    <property type="match status" value="1"/>
</dbReference>
<dbReference type="InterPro" id="IPR001451">
    <property type="entry name" value="Hexapep"/>
</dbReference>
<dbReference type="InterPro" id="IPR007691">
    <property type="entry name" value="LpxD"/>
</dbReference>
<dbReference type="InterPro" id="IPR011004">
    <property type="entry name" value="Trimer_LpxA-like_sf"/>
</dbReference>
<dbReference type="InterPro" id="IPR020573">
    <property type="entry name" value="UDP_GlcNAc_AcTrfase_non-rep"/>
</dbReference>
<dbReference type="NCBIfam" id="TIGR01853">
    <property type="entry name" value="lipid_A_lpxD"/>
    <property type="match status" value="1"/>
</dbReference>
<dbReference type="NCBIfam" id="NF002060">
    <property type="entry name" value="PRK00892.1"/>
    <property type="match status" value="1"/>
</dbReference>
<dbReference type="PANTHER" id="PTHR43378">
    <property type="entry name" value="UDP-3-O-ACYLGLUCOSAMINE N-ACYLTRANSFERASE"/>
    <property type="match status" value="1"/>
</dbReference>
<dbReference type="PANTHER" id="PTHR43378:SF2">
    <property type="entry name" value="UDP-3-O-ACYLGLUCOSAMINE N-ACYLTRANSFERASE 1, MITOCHONDRIAL-RELATED"/>
    <property type="match status" value="1"/>
</dbReference>
<dbReference type="Pfam" id="PF00132">
    <property type="entry name" value="Hexapep"/>
    <property type="match status" value="2"/>
</dbReference>
<dbReference type="Pfam" id="PF04613">
    <property type="entry name" value="LpxD"/>
    <property type="match status" value="1"/>
</dbReference>
<dbReference type="SUPFAM" id="SSF51161">
    <property type="entry name" value="Trimeric LpxA-like enzymes"/>
    <property type="match status" value="1"/>
</dbReference>
<comment type="function">
    <text evidence="1">Catalyzes the N-acylation of UDP-3-O-acylglucosamine using 3-hydroxyacyl-ACP as the acyl donor. Is involved in the biosynthesis of lipid A, a phosphorylated glycolipid that anchors the lipopolysaccharide to the outer membrane of the cell.</text>
</comment>
<comment type="catalytic activity">
    <reaction evidence="1">
        <text>a UDP-3-O-[(3R)-3-hydroxyacyl]-alpha-D-glucosamine + a (3R)-hydroxyacyl-[ACP] = a UDP-2-N,3-O-bis[(3R)-3-hydroxyacyl]-alpha-D-glucosamine + holo-[ACP] + H(+)</text>
        <dbReference type="Rhea" id="RHEA:53836"/>
        <dbReference type="Rhea" id="RHEA-COMP:9685"/>
        <dbReference type="Rhea" id="RHEA-COMP:9945"/>
        <dbReference type="ChEBI" id="CHEBI:15378"/>
        <dbReference type="ChEBI" id="CHEBI:64479"/>
        <dbReference type="ChEBI" id="CHEBI:78827"/>
        <dbReference type="ChEBI" id="CHEBI:137740"/>
        <dbReference type="ChEBI" id="CHEBI:137748"/>
        <dbReference type="EC" id="2.3.1.191"/>
    </reaction>
</comment>
<comment type="pathway">
    <text evidence="1">Bacterial outer membrane biogenesis; LPS lipid A biosynthesis.</text>
</comment>
<comment type="subunit">
    <text evidence="1">Homotrimer.</text>
</comment>
<comment type="similarity">
    <text evidence="1">Belongs to the transferase hexapeptide repeat family. LpxD subfamily.</text>
</comment>
<feature type="chain" id="PRO_1000050925" description="UDP-3-O-acylglucosamine N-acyltransferase">
    <location>
        <begin position="1"/>
        <end position="346"/>
    </location>
</feature>
<feature type="active site" description="Proton acceptor" evidence="1">
    <location>
        <position position="240"/>
    </location>
</feature>
<reference key="1">
    <citation type="journal article" date="2007" name="PLoS Biol.">
        <title>Evolution of symbiotic bacteria in the distal human intestine.</title>
        <authorList>
            <person name="Xu J."/>
            <person name="Mahowald M.A."/>
            <person name="Ley R.E."/>
            <person name="Lozupone C.A."/>
            <person name="Hamady M."/>
            <person name="Martens E.C."/>
            <person name="Henrissat B."/>
            <person name="Coutinho P.M."/>
            <person name="Minx P."/>
            <person name="Latreille P."/>
            <person name="Cordum H."/>
            <person name="Van Brunt A."/>
            <person name="Kim K."/>
            <person name="Fulton R.S."/>
            <person name="Fulton L.A."/>
            <person name="Clifton S.W."/>
            <person name="Wilson R.K."/>
            <person name="Knight R.D."/>
            <person name="Gordon J.I."/>
        </authorList>
    </citation>
    <scope>NUCLEOTIDE SEQUENCE [LARGE SCALE GENOMIC DNA]</scope>
    <source>
        <strain>ATCC 8482 / DSM 1447 / JCM 5826 / CCUG 4940 / NBRC 14291 / NCTC 11154</strain>
    </source>
</reference>
<evidence type="ECO:0000255" key="1">
    <source>
        <dbReference type="HAMAP-Rule" id="MF_00523"/>
    </source>
</evidence>
<name>LPXD_PHOV8</name>
<keyword id="KW-0012">Acyltransferase</keyword>
<keyword id="KW-0441">Lipid A biosynthesis</keyword>
<keyword id="KW-0444">Lipid biosynthesis</keyword>
<keyword id="KW-0443">Lipid metabolism</keyword>
<keyword id="KW-0677">Repeat</keyword>
<keyword id="KW-0808">Transferase</keyword>
<protein>
    <recommendedName>
        <fullName evidence="1">UDP-3-O-acylglucosamine N-acyltransferase</fullName>
        <ecNumber evidence="1">2.3.1.191</ecNumber>
    </recommendedName>
</protein>